<keyword id="KW-0067">ATP-binding</keyword>
<keyword id="KW-0143">Chaperone</keyword>
<keyword id="KW-0186">Copper</keyword>
<keyword id="KW-0479">Metal-binding</keyword>
<keyword id="KW-0496">Mitochondrion</keyword>
<keyword id="KW-0547">Nucleotide-binding</keyword>
<keyword id="KW-1185">Reference proteome</keyword>
<keyword id="KW-0809">Transit peptide</keyword>
<proteinExistence type="evidence at transcript level"/>
<accession>Q9FLP3</accession>
<accession>Q8LDE9</accession>
<protein>
    <recommendedName>
        <fullName evidence="8">GrpE protein homolog 1, mitochondrial</fullName>
    </recommendedName>
</protein>
<sequence>MLVSRVLSRVSRSAGLRSSFSSVVTPKRNQIPIVASRFHSLVHGTPNKLVAVPVSLRNHGTLDLNVLQRFGFFSSSSAEPKGNESNTEVPKTGETSENVEVGKATDAEIDFDDLSRDDLVKLVSEKEDLLKVQQKDIMEMKDKFLRTYAEQQNLMDRTNRNAESAKKFAVQNFATSLLDVADNLERASSVVKESFSKIDTSKDLAGATPLLKNLLEGVEMTEKQLAEVFRKAGLVKEDPLNEPFNPNRHNAVFQVPDASKPKGTIAHVLKSGYSLYDRVIRPAEVGVTCAVENQEGGKESAA</sequence>
<organism>
    <name type="scientific">Arabidopsis thaliana</name>
    <name type="common">Mouse-ear cress</name>
    <dbReference type="NCBI Taxonomy" id="3702"/>
    <lineage>
        <taxon>Eukaryota</taxon>
        <taxon>Viridiplantae</taxon>
        <taxon>Streptophyta</taxon>
        <taxon>Embryophyta</taxon>
        <taxon>Tracheophyta</taxon>
        <taxon>Spermatophyta</taxon>
        <taxon>Magnoliopsida</taxon>
        <taxon>eudicotyledons</taxon>
        <taxon>Gunneridae</taxon>
        <taxon>Pentapetalae</taxon>
        <taxon>rosids</taxon>
        <taxon>malvids</taxon>
        <taxon>Brassicales</taxon>
        <taxon>Brassicaceae</taxon>
        <taxon>Camelineae</taxon>
        <taxon>Arabidopsis</taxon>
    </lineage>
</organism>
<gene>
    <name evidence="8" type="primary">Mge1</name>
    <name evidence="10" type="ordered locus">At5g55200</name>
    <name evidence="11" type="ORF">MCO15.15</name>
</gene>
<feature type="transit peptide" description="Mitochondrion" evidence="3">
    <location>
        <begin position="1"/>
        <end position="39"/>
    </location>
</feature>
<feature type="chain" id="PRO_0000441899" description="GrpE protein homolog 1, mitochondrial">
    <location>
        <begin position="40"/>
        <end position="302"/>
    </location>
</feature>
<feature type="region of interest" description="Disordered" evidence="4">
    <location>
        <begin position="77"/>
        <end position="97"/>
    </location>
</feature>
<feature type="sequence conflict" description="In Ref. 4; AAM63252." evidence="9" ref="4">
    <original>F</original>
    <variation>L</variation>
    <location>
        <position position="20"/>
    </location>
</feature>
<feature type="sequence conflict" description="In Ref. 4; AAM63252." evidence="9" ref="4">
    <original>R</original>
    <variation>L</variation>
    <location>
        <position position="57"/>
    </location>
</feature>
<evidence type="ECO:0000250" key="1">
    <source>
        <dbReference type="UniProtKB" id="P38523"/>
    </source>
</evidence>
<evidence type="ECO:0000250" key="2">
    <source>
        <dbReference type="UniProtKB" id="Q9HAV7"/>
    </source>
</evidence>
<evidence type="ECO:0000255" key="3"/>
<evidence type="ECO:0000256" key="4">
    <source>
        <dbReference type="SAM" id="MobiDB-lite"/>
    </source>
</evidence>
<evidence type="ECO:0000269" key="5">
    <source>
    </source>
</evidence>
<evidence type="ECO:0000269" key="6">
    <source>
    </source>
</evidence>
<evidence type="ECO:0000269" key="7">
    <source>
    </source>
</evidence>
<evidence type="ECO:0000303" key="8">
    <source>
    </source>
</evidence>
<evidence type="ECO:0000305" key="9"/>
<evidence type="ECO:0000312" key="10">
    <source>
        <dbReference type="Araport" id="AT5G55200"/>
    </source>
</evidence>
<evidence type="ECO:0000312" key="11">
    <source>
        <dbReference type="EMBL" id="BAB08589.1"/>
    </source>
</evidence>
<reference key="1">
    <citation type="journal article" date="1998" name="DNA Res.">
        <title>Structural analysis of Arabidopsis thaliana chromosome 5. IV. Sequence features of the regions of 1,456,315 bp covered by nineteen physically assigned P1 and TAC clones.</title>
        <authorList>
            <person name="Sato S."/>
            <person name="Kaneko T."/>
            <person name="Kotani H."/>
            <person name="Nakamura Y."/>
            <person name="Asamizu E."/>
            <person name="Miyajima N."/>
            <person name="Tabata S."/>
        </authorList>
    </citation>
    <scope>NUCLEOTIDE SEQUENCE [LARGE SCALE GENOMIC DNA]</scope>
    <source>
        <strain>cv. Columbia</strain>
    </source>
</reference>
<reference key="2">
    <citation type="journal article" date="2017" name="Plant J.">
        <title>Araport11: a complete reannotation of the Arabidopsis thaliana reference genome.</title>
        <authorList>
            <person name="Cheng C.Y."/>
            <person name="Krishnakumar V."/>
            <person name="Chan A.P."/>
            <person name="Thibaud-Nissen F."/>
            <person name="Schobel S."/>
            <person name="Town C.D."/>
        </authorList>
    </citation>
    <scope>GENOME REANNOTATION</scope>
    <source>
        <strain>cv. Columbia</strain>
    </source>
</reference>
<reference key="3">
    <citation type="journal article" date="2003" name="Science">
        <title>Empirical analysis of transcriptional activity in the Arabidopsis genome.</title>
        <authorList>
            <person name="Yamada K."/>
            <person name="Lim J."/>
            <person name="Dale J.M."/>
            <person name="Chen H."/>
            <person name="Shinn P."/>
            <person name="Palm C.J."/>
            <person name="Southwick A.M."/>
            <person name="Wu H.C."/>
            <person name="Kim C.J."/>
            <person name="Nguyen M."/>
            <person name="Pham P.K."/>
            <person name="Cheuk R.F."/>
            <person name="Karlin-Newmann G."/>
            <person name="Liu S.X."/>
            <person name="Lam B."/>
            <person name="Sakano H."/>
            <person name="Wu T."/>
            <person name="Yu G."/>
            <person name="Miranda M."/>
            <person name="Quach H.L."/>
            <person name="Tripp M."/>
            <person name="Chang C.H."/>
            <person name="Lee J.M."/>
            <person name="Toriumi M.J."/>
            <person name="Chan M.M."/>
            <person name="Tang C.C."/>
            <person name="Onodera C.S."/>
            <person name="Deng J.M."/>
            <person name="Akiyama K."/>
            <person name="Ansari Y."/>
            <person name="Arakawa T."/>
            <person name="Banh J."/>
            <person name="Banno F."/>
            <person name="Bowser L."/>
            <person name="Brooks S.Y."/>
            <person name="Carninci P."/>
            <person name="Chao Q."/>
            <person name="Choy N."/>
            <person name="Enju A."/>
            <person name="Goldsmith A.D."/>
            <person name="Gurjal M."/>
            <person name="Hansen N.F."/>
            <person name="Hayashizaki Y."/>
            <person name="Johnson-Hopson C."/>
            <person name="Hsuan V.W."/>
            <person name="Iida K."/>
            <person name="Karnes M."/>
            <person name="Khan S."/>
            <person name="Koesema E."/>
            <person name="Ishida J."/>
            <person name="Jiang P.X."/>
            <person name="Jones T."/>
            <person name="Kawai J."/>
            <person name="Kamiya A."/>
            <person name="Meyers C."/>
            <person name="Nakajima M."/>
            <person name="Narusaka M."/>
            <person name="Seki M."/>
            <person name="Sakurai T."/>
            <person name="Satou M."/>
            <person name="Tamse R."/>
            <person name="Vaysberg M."/>
            <person name="Wallender E.K."/>
            <person name="Wong C."/>
            <person name="Yamamura Y."/>
            <person name="Yuan S."/>
            <person name="Shinozaki K."/>
            <person name="Davis R.W."/>
            <person name="Theologis A."/>
            <person name="Ecker J.R."/>
        </authorList>
    </citation>
    <scope>NUCLEOTIDE SEQUENCE [LARGE SCALE MRNA]</scope>
    <source>
        <strain>cv. Columbia</strain>
    </source>
</reference>
<reference key="4">
    <citation type="submission" date="2002-03" db="EMBL/GenBank/DDBJ databases">
        <title>Full-length cDNA from Arabidopsis thaliana.</title>
        <authorList>
            <person name="Brover V.V."/>
            <person name="Troukhan M.E."/>
            <person name="Alexandrov N.A."/>
            <person name="Lu Y.-P."/>
            <person name="Flavell R.B."/>
            <person name="Feldmann K.A."/>
        </authorList>
    </citation>
    <scope>NUCLEOTIDE SEQUENCE [LARGE SCALE MRNA]</scope>
</reference>
<reference key="5">
    <citation type="journal article" date="2006" name="J. Proteome Res.">
        <title>Analysis of the soluble ATP-binding proteome of plant mitochondria identifies new proteins and nucleotide triphosphate interactions within the matrix.</title>
        <authorList>
            <person name="Ito J."/>
            <person name="Heazlewood J.L."/>
            <person name="Millar A.H."/>
        </authorList>
    </citation>
    <scope>FUNCTION</scope>
    <scope>SUBCELLULAR LOCATION</scope>
</reference>
<reference key="6">
    <citation type="journal article" date="2010" name="Plant Physiol.">
        <title>Divalent metal ions in plant mitochondria and their role in interactions with proteins and oxidative stress-induced damage to respiratory function.</title>
        <authorList>
            <person name="Tan Y.-F."/>
            <person name="O'Toole N."/>
            <person name="Taylor N.L."/>
            <person name="Millar A.H."/>
        </authorList>
    </citation>
    <scope>FUNCTION</scope>
    <source>
        <strain>cv. Landsberg erecta</strain>
    </source>
</reference>
<reference key="7">
    <citation type="journal article" date="2012" name="Plant Physiol.">
        <title>Recent gene duplication and subfunctionalization produced a mitochondrial GrpE, the nucleotide exchange factor of the Hsp70 complex, specialized in thermotolerance to chronic heat stress in Arabidopsis.</title>
        <authorList>
            <person name="Hu C."/>
            <person name="Lin S.Y."/>
            <person name="Chi W.T."/>
            <person name="Charng Y.Y."/>
        </authorList>
    </citation>
    <scope>INDUCTION BY UV-B</scope>
    <scope>GENE FAMILY</scope>
    <scope>NOMENCLATURE</scope>
    <source>
        <strain>cv. Columbia</strain>
    </source>
</reference>
<name>MGE1_ARATH</name>
<dbReference type="EMBL" id="AB010071">
    <property type="protein sequence ID" value="BAB08589.1"/>
    <property type="molecule type" value="Genomic_DNA"/>
</dbReference>
<dbReference type="EMBL" id="CP002688">
    <property type="protein sequence ID" value="AED96599.1"/>
    <property type="molecule type" value="Genomic_DNA"/>
</dbReference>
<dbReference type="EMBL" id="AY042852">
    <property type="protein sequence ID" value="AAK68792.1"/>
    <property type="molecule type" value="mRNA"/>
</dbReference>
<dbReference type="EMBL" id="AY081551">
    <property type="protein sequence ID" value="AAM10113.1"/>
    <property type="molecule type" value="mRNA"/>
</dbReference>
<dbReference type="EMBL" id="AY086042">
    <property type="protein sequence ID" value="AAM63252.1"/>
    <property type="molecule type" value="mRNA"/>
</dbReference>
<dbReference type="RefSeq" id="NP_200331.1">
    <property type="nucleotide sequence ID" value="NM_124902.3"/>
</dbReference>
<dbReference type="SMR" id="Q9FLP3"/>
<dbReference type="FunCoup" id="Q9FLP3">
    <property type="interactions" value="3061"/>
</dbReference>
<dbReference type="IntAct" id="Q9FLP3">
    <property type="interactions" value="4"/>
</dbReference>
<dbReference type="STRING" id="3702.Q9FLP3"/>
<dbReference type="iPTMnet" id="Q9FLP3"/>
<dbReference type="MetOSite" id="Q9FLP3"/>
<dbReference type="PaxDb" id="3702-AT5G55200.1"/>
<dbReference type="ProteomicsDB" id="250927"/>
<dbReference type="EnsemblPlants" id="AT5G55200.1">
    <property type="protein sequence ID" value="AT5G55200.1"/>
    <property type="gene ID" value="AT5G55200"/>
</dbReference>
<dbReference type="GeneID" id="835613"/>
<dbReference type="Gramene" id="AT5G55200.1">
    <property type="protein sequence ID" value="AT5G55200.1"/>
    <property type="gene ID" value="AT5G55200"/>
</dbReference>
<dbReference type="KEGG" id="ath:AT5G55200"/>
<dbReference type="Araport" id="AT5G55200"/>
<dbReference type="TAIR" id="AT5G55200">
    <property type="gene designation" value="MGE1"/>
</dbReference>
<dbReference type="eggNOG" id="KOG3003">
    <property type="taxonomic scope" value="Eukaryota"/>
</dbReference>
<dbReference type="HOGENOM" id="CLU_057217_1_0_1"/>
<dbReference type="InParanoid" id="Q9FLP3"/>
<dbReference type="OMA" id="PNEICGK"/>
<dbReference type="PhylomeDB" id="Q9FLP3"/>
<dbReference type="PRO" id="PR:Q9FLP3"/>
<dbReference type="Proteomes" id="UP000006548">
    <property type="component" value="Chromosome 5"/>
</dbReference>
<dbReference type="ExpressionAtlas" id="Q9FLP3">
    <property type="expression patterns" value="baseline and differential"/>
</dbReference>
<dbReference type="GO" id="GO:0005759">
    <property type="term" value="C:mitochondrial matrix"/>
    <property type="evidence" value="ECO:0007669"/>
    <property type="project" value="UniProtKB-SubCell"/>
</dbReference>
<dbReference type="GO" id="GO:0005739">
    <property type="term" value="C:mitochondrion"/>
    <property type="evidence" value="ECO:0007005"/>
    <property type="project" value="TAIR"/>
</dbReference>
<dbReference type="GO" id="GO:0000774">
    <property type="term" value="F:adenyl-nucleotide exchange factor activity"/>
    <property type="evidence" value="ECO:0007669"/>
    <property type="project" value="InterPro"/>
</dbReference>
<dbReference type="GO" id="GO:0005524">
    <property type="term" value="F:ATP binding"/>
    <property type="evidence" value="ECO:0007005"/>
    <property type="project" value="TAIR"/>
</dbReference>
<dbReference type="GO" id="GO:0005507">
    <property type="term" value="F:copper ion binding"/>
    <property type="evidence" value="ECO:0007005"/>
    <property type="project" value="TAIR"/>
</dbReference>
<dbReference type="GO" id="GO:0042803">
    <property type="term" value="F:protein homodimerization activity"/>
    <property type="evidence" value="ECO:0007669"/>
    <property type="project" value="InterPro"/>
</dbReference>
<dbReference type="GO" id="GO:0051087">
    <property type="term" value="F:protein-folding chaperone binding"/>
    <property type="evidence" value="ECO:0007669"/>
    <property type="project" value="InterPro"/>
</dbReference>
<dbReference type="GO" id="GO:0006457">
    <property type="term" value="P:protein folding"/>
    <property type="evidence" value="ECO:0007669"/>
    <property type="project" value="InterPro"/>
</dbReference>
<dbReference type="GO" id="GO:0009411">
    <property type="term" value="P:response to UV"/>
    <property type="evidence" value="ECO:0000270"/>
    <property type="project" value="TAIR"/>
</dbReference>
<dbReference type="CDD" id="cd00446">
    <property type="entry name" value="GrpE"/>
    <property type="match status" value="1"/>
</dbReference>
<dbReference type="FunFam" id="2.30.22.10:FF:000002">
    <property type="entry name" value="GrpE protein homolog"/>
    <property type="match status" value="1"/>
</dbReference>
<dbReference type="FunFam" id="3.90.20.20:FF:000005">
    <property type="entry name" value="GrpE protein homolog"/>
    <property type="match status" value="1"/>
</dbReference>
<dbReference type="Gene3D" id="3.90.20.20">
    <property type="match status" value="1"/>
</dbReference>
<dbReference type="Gene3D" id="2.30.22.10">
    <property type="entry name" value="Head domain of nucleotide exchange factor GrpE"/>
    <property type="match status" value="1"/>
</dbReference>
<dbReference type="HAMAP" id="MF_01151">
    <property type="entry name" value="GrpE"/>
    <property type="match status" value="1"/>
</dbReference>
<dbReference type="InterPro" id="IPR000740">
    <property type="entry name" value="GrpE"/>
</dbReference>
<dbReference type="InterPro" id="IPR013805">
    <property type="entry name" value="GrpE_coiled_coil"/>
</dbReference>
<dbReference type="InterPro" id="IPR009012">
    <property type="entry name" value="GrpE_head"/>
</dbReference>
<dbReference type="PANTHER" id="PTHR21237">
    <property type="entry name" value="GRPE PROTEIN"/>
    <property type="match status" value="1"/>
</dbReference>
<dbReference type="PANTHER" id="PTHR21237:SF23">
    <property type="entry name" value="GRPE PROTEIN HOMOLOG, MITOCHONDRIAL"/>
    <property type="match status" value="1"/>
</dbReference>
<dbReference type="Pfam" id="PF01025">
    <property type="entry name" value="GrpE"/>
    <property type="match status" value="1"/>
</dbReference>
<dbReference type="PRINTS" id="PR00773">
    <property type="entry name" value="GRPEPROTEIN"/>
</dbReference>
<dbReference type="SUPFAM" id="SSF58014">
    <property type="entry name" value="Coiled-coil domain of nucleotide exchange factor GrpE"/>
    <property type="match status" value="1"/>
</dbReference>
<dbReference type="SUPFAM" id="SSF51064">
    <property type="entry name" value="Head domain of nucleotide exchange factor GrpE"/>
    <property type="match status" value="1"/>
</dbReference>
<dbReference type="PROSITE" id="PS01071">
    <property type="entry name" value="GRPE"/>
    <property type="match status" value="1"/>
</dbReference>
<comment type="function">
    <text evidence="1 2 5 6">Essential component of the PAM complex, a complex required for the translocation of transit peptide-containing proteins from the inner membrane into the mitochondrial matrix in an ATP-dependent manner (By similarity). Seems to control the nucleotide-dependent binding of mitochondrial HSP70 to substrate proteins (By similarity). Binds ATP (PubMed:17137349). Interacts with copper ions Cu(2+) (PubMed:20018591).</text>
</comment>
<comment type="subunit">
    <text evidence="1">Probable component of the PAM complex, at least composed of SSC1 (mtHsp70), MGE1, TIM44, PAM16/TIM16, PAM17 and PAM18/TIM14. Interacts with SSQ1.</text>
</comment>
<comment type="subcellular location">
    <subcellularLocation>
        <location evidence="5">Mitochondrion matrix</location>
    </subcellularLocation>
</comment>
<comment type="induction">
    <text evidence="7">By UV-B.</text>
</comment>
<comment type="similarity">
    <text evidence="9">Belongs to the GrpE family.</text>
</comment>